<protein>
    <recommendedName>
        <fullName evidence="1">Glycerol-3-phosphate acyltransferase</fullName>
    </recommendedName>
    <alternativeName>
        <fullName evidence="1">G3P acyltransferase</fullName>
        <shortName evidence="1">GPAT</shortName>
        <ecNumber evidence="1">2.3.1.15</ecNumber>
        <ecNumber evidence="1">2.3.1.n5</ecNumber>
    </alternativeName>
    <alternativeName>
        <fullName evidence="1">Lysophosphatidic acid synthase</fullName>
        <shortName evidence="1">LPA synthase</shortName>
    </alternativeName>
</protein>
<reference key="1">
    <citation type="journal article" date="2008" name="Genome Res.">
        <title>Comparative genome analysis of Salmonella enteritidis PT4 and Salmonella gallinarum 287/91 provides insights into evolutionary and host adaptation pathways.</title>
        <authorList>
            <person name="Thomson N.R."/>
            <person name="Clayton D.J."/>
            <person name="Windhorst D."/>
            <person name="Vernikos G."/>
            <person name="Davidson S."/>
            <person name="Churcher C."/>
            <person name="Quail M.A."/>
            <person name="Stevens M."/>
            <person name="Jones M.A."/>
            <person name="Watson M."/>
            <person name="Barron A."/>
            <person name="Layton A."/>
            <person name="Pickard D."/>
            <person name="Kingsley R.A."/>
            <person name="Bignell A."/>
            <person name="Clark L."/>
            <person name="Harris B."/>
            <person name="Ormond D."/>
            <person name="Abdellah Z."/>
            <person name="Brooks K."/>
            <person name="Cherevach I."/>
            <person name="Chillingworth T."/>
            <person name="Woodward J."/>
            <person name="Norberczak H."/>
            <person name="Lord A."/>
            <person name="Arrowsmith C."/>
            <person name="Jagels K."/>
            <person name="Moule S."/>
            <person name="Mungall K."/>
            <person name="Saunders M."/>
            <person name="Whitehead S."/>
            <person name="Chabalgoity J.A."/>
            <person name="Maskell D."/>
            <person name="Humphreys T."/>
            <person name="Roberts M."/>
            <person name="Barrow P.A."/>
            <person name="Dougan G."/>
            <person name="Parkhill J."/>
        </authorList>
    </citation>
    <scope>NUCLEOTIDE SEQUENCE [LARGE SCALE GENOMIC DNA]</scope>
    <source>
        <strain>287/91 / NCTC 13346</strain>
    </source>
</reference>
<comment type="function">
    <text evidence="1">Catalyzes the transfer of an acyl group from acyl-ACP to glycerol-3-phosphate (G3P) to form lysophosphatidic acid (LPA). This enzyme can also utilize acyl-CoA as fatty acyl donor, but not acyl-PO(4).</text>
</comment>
<comment type="catalytic activity">
    <reaction evidence="1">
        <text>sn-glycerol 3-phosphate + an acyl-CoA = a 1-acyl-sn-glycero-3-phosphate + CoA</text>
        <dbReference type="Rhea" id="RHEA:15325"/>
        <dbReference type="ChEBI" id="CHEBI:57287"/>
        <dbReference type="ChEBI" id="CHEBI:57597"/>
        <dbReference type="ChEBI" id="CHEBI:57970"/>
        <dbReference type="ChEBI" id="CHEBI:58342"/>
        <dbReference type="EC" id="2.3.1.15"/>
    </reaction>
</comment>
<comment type="catalytic activity">
    <reaction evidence="1">
        <text>a fatty acyl-[ACP] + sn-glycerol 3-phosphate = a 1-acyl-sn-glycero-3-phosphate + holo-[ACP]</text>
        <dbReference type="Rhea" id="RHEA:42300"/>
        <dbReference type="Rhea" id="RHEA-COMP:9685"/>
        <dbReference type="Rhea" id="RHEA-COMP:14125"/>
        <dbReference type="ChEBI" id="CHEBI:57597"/>
        <dbReference type="ChEBI" id="CHEBI:57970"/>
        <dbReference type="ChEBI" id="CHEBI:64479"/>
        <dbReference type="ChEBI" id="CHEBI:138651"/>
        <dbReference type="EC" id="2.3.1.n5"/>
    </reaction>
</comment>
<comment type="pathway">
    <text evidence="1">Lipid metabolism; phospholipid metabolism.</text>
</comment>
<comment type="subunit">
    <text evidence="1">Probably interacts with PlsX.</text>
</comment>
<comment type="subcellular location">
    <subcellularLocation>
        <location evidence="1">Cell inner membrane</location>
        <topology evidence="1">Multi-pass membrane protein</topology>
    </subcellularLocation>
</comment>
<comment type="similarity">
    <text evidence="1">Belongs to the PlsY family.</text>
</comment>
<gene>
    <name evidence="1" type="primary">plsY</name>
    <name type="synonym">ygiH</name>
    <name type="ordered locus">SG3103</name>
</gene>
<organism>
    <name type="scientific">Salmonella gallinarum (strain 287/91 / NCTC 13346)</name>
    <dbReference type="NCBI Taxonomy" id="550538"/>
    <lineage>
        <taxon>Bacteria</taxon>
        <taxon>Pseudomonadati</taxon>
        <taxon>Pseudomonadota</taxon>
        <taxon>Gammaproteobacteria</taxon>
        <taxon>Enterobacterales</taxon>
        <taxon>Enterobacteriaceae</taxon>
        <taxon>Salmonella</taxon>
    </lineage>
</organism>
<dbReference type="EC" id="2.3.1.15" evidence="1"/>
<dbReference type="EC" id="2.3.1.n5" evidence="1"/>
<dbReference type="EMBL" id="AM933173">
    <property type="protein sequence ID" value="CAR38904.1"/>
    <property type="molecule type" value="Genomic_DNA"/>
</dbReference>
<dbReference type="RefSeq" id="WP_001272784.1">
    <property type="nucleotide sequence ID" value="NC_011274.1"/>
</dbReference>
<dbReference type="SMR" id="B5REG5"/>
<dbReference type="KEGG" id="seg:SG3103"/>
<dbReference type="HOGENOM" id="CLU_081254_0_2_6"/>
<dbReference type="UniPathway" id="UPA00085"/>
<dbReference type="Proteomes" id="UP000008321">
    <property type="component" value="Chromosome"/>
</dbReference>
<dbReference type="GO" id="GO:0005886">
    <property type="term" value="C:plasma membrane"/>
    <property type="evidence" value="ECO:0007669"/>
    <property type="project" value="UniProtKB-SubCell"/>
</dbReference>
<dbReference type="GO" id="GO:0043772">
    <property type="term" value="F:acyl-phosphate glycerol-3-phosphate acyltransferase activity"/>
    <property type="evidence" value="ECO:0007669"/>
    <property type="project" value="InterPro"/>
</dbReference>
<dbReference type="GO" id="GO:0004366">
    <property type="term" value="F:glycerol-3-phosphate O-acyltransferase activity"/>
    <property type="evidence" value="ECO:0007669"/>
    <property type="project" value="UniProtKB-UniRule"/>
</dbReference>
<dbReference type="GO" id="GO:0008654">
    <property type="term" value="P:phospholipid biosynthetic process"/>
    <property type="evidence" value="ECO:0007669"/>
    <property type="project" value="UniProtKB-UniRule"/>
</dbReference>
<dbReference type="HAMAP" id="MF_01043">
    <property type="entry name" value="PlsY"/>
    <property type="match status" value="1"/>
</dbReference>
<dbReference type="InterPro" id="IPR003811">
    <property type="entry name" value="G3P_acylTferase_PlsY"/>
</dbReference>
<dbReference type="NCBIfam" id="TIGR00023">
    <property type="entry name" value="glycerol-3-phosphate 1-O-acyltransferase PlsY"/>
    <property type="match status" value="1"/>
</dbReference>
<dbReference type="PANTHER" id="PTHR30309:SF0">
    <property type="entry name" value="GLYCEROL-3-PHOSPHATE ACYLTRANSFERASE-RELATED"/>
    <property type="match status" value="1"/>
</dbReference>
<dbReference type="PANTHER" id="PTHR30309">
    <property type="entry name" value="INNER MEMBRANE PROTEIN YGIH"/>
    <property type="match status" value="1"/>
</dbReference>
<dbReference type="Pfam" id="PF02660">
    <property type="entry name" value="G3P_acyltransf"/>
    <property type="match status" value="1"/>
</dbReference>
<dbReference type="SMART" id="SM01207">
    <property type="entry name" value="G3P_acyltransf"/>
    <property type="match status" value="1"/>
</dbReference>
<sequence>MSAIAPGMILFAYLCGSISSAILVCRIAGLPDPRESGSGNPGATNVLRIGGKGAAVAVLIFDILKGMLPVWGAYALGVTPFWLGLIAIAACLGHIWPVFFGFKGGKGVATAFGAIAPIGWDLTGVMAGTWLLTVLLSGYSSLGAIVSALIAPFYVWWFKPQFTFPVSMLSCLILLRHHDNIQRLWRRQETKIWTKLKKKRQKD</sequence>
<name>PLSY_SALG2</name>
<accession>B5REG5</accession>
<keyword id="KW-0997">Cell inner membrane</keyword>
<keyword id="KW-1003">Cell membrane</keyword>
<keyword id="KW-0444">Lipid biosynthesis</keyword>
<keyword id="KW-0443">Lipid metabolism</keyword>
<keyword id="KW-0472">Membrane</keyword>
<keyword id="KW-0594">Phospholipid biosynthesis</keyword>
<keyword id="KW-1208">Phospholipid metabolism</keyword>
<keyword id="KW-0808">Transferase</keyword>
<keyword id="KW-0812">Transmembrane</keyword>
<keyword id="KW-1133">Transmembrane helix</keyword>
<proteinExistence type="inferred from homology"/>
<feature type="chain" id="PRO_1000136117" description="Glycerol-3-phosphate acyltransferase">
    <location>
        <begin position="1"/>
        <end position="203"/>
    </location>
</feature>
<feature type="topological domain" description="Periplasmic" evidence="1">
    <location>
        <begin position="1"/>
        <end position="3"/>
    </location>
</feature>
<feature type="transmembrane region" description="Helical" evidence="1">
    <location>
        <begin position="4"/>
        <end position="24"/>
    </location>
</feature>
<feature type="topological domain" description="Cytoplasmic" evidence="1">
    <location>
        <begin position="25"/>
        <end position="52"/>
    </location>
</feature>
<feature type="transmembrane region" description="Helical" evidence="1">
    <location>
        <begin position="53"/>
        <end position="73"/>
    </location>
</feature>
<feature type="topological domain" description="Periplasmic" evidence="1">
    <location>
        <begin position="74"/>
        <end position="80"/>
    </location>
</feature>
<feature type="transmembrane region" description="Helical" evidence="1">
    <location>
        <begin position="81"/>
        <end position="101"/>
    </location>
</feature>
<feature type="topological domain" description="Cytoplasmic" evidence="1">
    <location>
        <begin position="102"/>
        <end position="111"/>
    </location>
</feature>
<feature type="transmembrane region" description="Helical" evidence="1">
    <location>
        <begin position="112"/>
        <end position="132"/>
    </location>
</feature>
<feature type="topological domain" description="Periplasmic" evidence="1">
    <location>
        <begin position="133"/>
        <end position="137"/>
    </location>
</feature>
<feature type="transmembrane region" description="Helical" evidence="1">
    <location>
        <begin position="138"/>
        <end position="158"/>
    </location>
</feature>
<feature type="topological domain" description="Cytoplasmic" evidence="1">
    <location>
        <begin position="159"/>
        <end position="203"/>
    </location>
</feature>
<evidence type="ECO:0000255" key="1">
    <source>
        <dbReference type="HAMAP-Rule" id="MF_01043"/>
    </source>
</evidence>